<protein>
    <recommendedName>
        <fullName>Bystin</fullName>
    </recommendedName>
</protein>
<comment type="function">
    <text evidence="2">Required for processing of 20S pre-rRNA precursor and biogenesis of 40S ribosomal subunits.</text>
</comment>
<comment type="subunit">
    <text evidence="1">Binds trophinin, tastin and cytokeratins.</text>
</comment>
<comment type="subcellular location">
    <subcellularLocation>
        <location evidence="2">Cytoplasm</location>
    </subcellularLocation>
    <subcellularLocation>
        <location evidence="2">Nucleus</location>
        <location evidence="2">Nucleolus</location>
    </subcellularLocation>
    <text evidence="2">Associated with 40S ribosomal subunits.</text>
</comment>
<comment type="similarity">
    <text evidence="4">Belongs to the bystin family.</text>
</comment>
<organism>
    <name type="scientific">Bos taurus</name>
    <name type="common">Bovine</name>
    <dbReference type="NCBI Taxonomy" id="9913"/>
    <lineage>
        <taxon>Eukaryota</taxon>
        <taxon>Metazoa</taxon>
        <taxon>Chordata</taxon>
        <taxon>Craniata</taxon>
        <taxon>Vertebrata</taxon>
        <taxon>Euteleostomi</taxon>
        <taxon>Mammalia</taxon>
        <taxon>Eutheria</taxon>
        <taxon>Laurasiatheria</taxon>
        <taxon>Artiodactyla</taxon>
        <taxon>Ruminantia</taxon>
        <taxon>Pecora</taxon>
        <taxon>Bovidae</taxon>
        <taxon>Bovinae</taxon>
        <taxon>Bos</taxon>
    </lineage>
</organism>
<gene>
    <name type="primary">BYSL</name>
</gene>
<feature type="chain" id="PRO_0000237613" description="Bystin">
    <location>
        <begin position="1"/>
        <end position="435"/>
    </location>
</feature>
<feature type="region of interest" description="Disordered" evidence="3">
    <location>
        <begin position="1"/>
        <end position="102"/>
    </location>
</feature>
<feature type="compositionally biased region" description="Basic and acidic residues" evidence="3">
    <location>
        <begin position="71"/>
        <end position="87"/>
    </location>
</feature>
<feature type="modified residue" description="Omega-N-methylarginine" evidence="2">
    <location>
        <position position="40"/>
    </location>
</feature>
<feature type="modified residue" description="Phosphoserine" evidence="2">
    <location>
        <position position="98"/>
    </location>
</feature>
<feature type="modified residue" description="Phosphothreonine" evidence="2">
    <location>
        <position position="154"/>
    </location>
</feature>
<feature type="modified residue" description="Phosphoserine" evidence="2">
    <location>
        <position position="165"/>
    </location>
</feature>
<feature type="modified residue" description="Phosphoserine" evidence="2">
    <location>
        <position position="412"/>
    </location>
</feature>
<keyword id="KW-0963">Cytoplasm</keyword>
<keyword id="KW-0488">Methylation</keyword>
<keyword id="KW-0539">Nucleus</keyword>
<keyword id="KW-0597">Phosphoprotein</keyword>
<keyword id="KW-1185">Reference proteome</keyword>
<keyword id="KW-0690">Ribosome biogenesis</keyword>
<proteinExistence type="evidence at transcript level"/>
<name>BYST_BOVIN</name>
<evidence type="ECO:0000250" key="1"/>
<evidence type="ECO:0000250" key="2">
    <source>
        <dbReference type="UniProtKB" id="Q13895"/>
    </source>
</evidence>
<evidence type="ECO:0000256" key="3">
    <source>
        <dbReference type="SAM" id="MobiDB-lite"/>
    </source>
</evidence>
<evidence type="ECO:0000305" key="4"/>
<accession>Q5E9N0</accession>
<accession>B0JYL5</accession>
<dbReference type="EMBL" id="BT020890">
    <property type="protein sequence ID" value="AAX08907.1"/>
    <property type="molecule type" value="mRNA"/>
</dbReference>
<dbReference type="EMBL" id="BC151370">
    <property type="protein sequence ID" value="AAI51371.1"/>
    <property type="molecule type" value="mRNA"/>
</dbReference>
<dbReference type="RefSeq" id="NP_001014924.1">
    <property type="nucleotide sequence ID" value="NM_001014924.1"/>
</dbReference>
<dbReference type="SMR" id="Q5E9N0"/>
<dbReference type="FunCoup" id="Q5E9N0">
    <property type="interactions" value="1762"/>
</dbReference>
<dbReference type="STRING" id="9913.ENSBTAP00000013326"/>
<dbReference type="PaxDb" id="9913-ENSBTAP00000013326"/>
<dbReference type="Ensembl" id="ENSBTAT00000013326.5">
    <property type="protein sequence ID" value="ENSBTAP00000013326.3"/>
    <property type="gene ID" value="ENSBTAG00000010101.5"/>
</dbReference>
<dbReference type="GeneID" id="514128"/>
<dbReference type="KEGG" id="bta:514128"/>
<dbReference type="CTD" id="705"/>
<dbReference type="VEuPathDB" id="HostDB:ENSBTAG00000010101"/>
<dbReference type="VGNC" id="VGNC:26611">
    <property type="gene designation" value="BYSL"/>
</dbReference>
<dbReference type="eggNOG" id="KOG3871">
    <property type="taxonomic scope" value="Eukaryota"/>
</dbReference>
<dbReference type="GeneTree" id="ENSGT00390000007241"/>
<dbReference type="HOGENOM" id="CLU_029727_0_0_1"/>
<dbReference type="InParanoid" id="Q5E9N0"/>
<dbReference type="OMA" id="TKLPVIW"/>
<dbReference type="OrthoDB" id="2192561at2759"/>
<dbReference type="TreeFam" id="TF312968"/>
<dbReference type="Reactome" id="R-BTA-6791226">
    <property type="pathway name" value="Major pathway of rRNA processing in the nucleolus and cytosol"/>
</dbReference>
<dbReference type="CD-CODE" id="D7FE2080">
    <property type="entry name" value="Nucleolus"/>
</dbReference>
<dbReference type="Proteomes" id="UP000009136">
    <property type="component" value="Chromosome 23"/>
</dbReference>
<dbReference type="Bgee" id="ENSBTAG00000010101">
    <property type="expression patterns" value="Expressed in digestive system secreted substance and 106 other cell types or tissues"/>
</dbReference>
<dbReference type="GO" id="GO:0045177">
    <property type="term" value="C:apical part of cell"/>
    <property type="evidence" value="ECO:0007669"/>
    <property type="project" value="Ensembl"/>
</dbReference>
<dbReference type="GO" id="GO:0005694">
    <property type="term" value="C:chromosome"/>
    <property type="evidence" value="ECO:0007669"/>
    <property type="project" value="Ensembl"/>
</dbReference>
<dbReference type="GO" id="GO:0005737">
    <property type="term" value="C:cytoplasm"/>
    <property type="evidence" value="ECO:0000318"/>
    <property type="project" value="GO_Central"/>
</dbReference>
<dbReference type="GO" id="GO:0005730">
    <property type="term" value="C:nucleolus"/>
    <property type="evidence" value="ECO:0000318"/>
    <property type="project" value="GO_Central"/>
</dbReference>
<dbReference type="GO" id="GO:0005654">
    <property type="term" value="C:nucleoplasm"/>
    <property type="evidence" value="ECO:0007669"/>
    <property type="project" value="Ensembl"/>
</dbReference>
<dbReference type="GO" id="GO:0030688">
    <property type="term" value="C:preribosome, small subunit precursor"/>
    <property type="evidence" value="ECO:0000318"/>
    <property type="project" value="GO_Central"/>
</dbReference>
<dbReference type="GO" id="GO:0030515">
    <property type="term" value="F:snoRNA binding"/>
    <property type="evidence" value="ECO:0000318"/>
    <property type="project" value="GO_Central"/>
</dbReference>
<dbReference type="GO" id="GO:0000462">
    <property type="term" value="P:maturation of SSU-rRNA from tricistronic rRNA transcript (SSU-rRNA, 5.8S rRNA, LSU-rRNA)"/>
    <property type="evidence" value="ECO:0007669"/>
    <property type="project" value="Ensembl"/>
</dbReference>
<dbReference type="GO" id="GO:0006364">
    <property type="term" value="P:rRNA processing"/>
    <property type="evidence" value="ECO:0000318"/>
    <property type="project" value="GO_Central"/>
</dbReference>
<dbReference type="GO" id="GO:0072089">
    <property type="term" value="P:stem cell proliferation"/>
    <property type="evidence" value="ECO:0007669"/>
    <property type="project" value="Ensembl"/>
</dbReference>
<dbReference type="GO" id="GO:0001829">
    <property type="term" value="P:trophectodermal cell differentiation"/>
    <property type="evidence" value="ECO:0007669"/>
    <property type="project" value="Ensembl"/>
</dbReference>
<dbReference type="InterPro" id="IPR007955">
    <property type="entry name" value="Bystin"/>
</dbReference>
<dbReference type="PANTHER" id="PTHR12821">
    <property type="entry name" value="BYSTIN"/>
    <property type="match status" value="1"/>
</dbReference>
<dbReference type="PANTHER" id="PTHR12821:SF0">
    <property type="entry name" value="BYSTIN"/>
    <property type="match status" value="1"/>
</dbReference>
<dbReference type="Pfam" id="PF05291">
    <property type="entry name" value="Bystin"/>
    <property type="match status" value="1"/>
</dbReference>
<reference key="1">
    <citation type="journal article" date="2005" name="BMC Genomics">
        <title>Characterization of 954 bovine full-CDS cDNA sequences.</title>
        <authorList>
            <person name="Harhay G.P."/>
            <person name="Sonstegard T.S."/>
            <person name="Keele J.W."/>
            <person name="Heaton M.P."/>
            <person name="Clawson M.L."/>
            <person name="Snelling W.M."/>
            <person name="Wiedmann R.T."/>
            <person name="Van Tassell C.P."/>
            <person name="Smith T.P.L."/>
        </authorList>
    </citation>
    <scope>NUCLEOTIDE SEQUENCE [LARGE SCALE MRNA]</scope>
</reference>
<reference key="2">
    <citation type="submission" date="2007-07" db="EMBL/GenBank/DDBJ databases">
        <authorList>
            <consortium name="NIH - Mammalian Gene Collection (MGC) project"/>
        </authorList>
    </citation>
    <scope>NUCLEOTIDE SEQUENCE [LARGE SCALE MRNA]</scope>
    <source>
        <strain>Hereford</strain>
        <tissue>Fetal muscle</tissue>
    </source>
</reference>
<sequence>MPKFKAARGAGVQEKHAPLAEQILAGDAVRAGTREKRRGRGTGDEEEEYVGPRLTRRILQQARQQQEELEAEHGSGDRPAVPRERTTRLGPGVPQDGSDDEEWPTLEQAAARAGPGYQAEVVVDPEDERAIEMFMNQNPPARRTLADIIMEKLTEKQTEVETVMSEVSGFPVPQLDPRVLEVYRGVREVLSKYRSGKLPKAFKIIPALSNWEQILYITEPEAWTAAAMYQATRIFASNLKERMAQRFYNLVLLPRVRDDIAEYKRLNFHLYMALKKALFKPGAWFKGILIPLCESGTCTLREAIIVGSIITKCSIPVLHSSAAMLKIAEMEYSGANSIFLRLLLDKKYALPYRVLDALVFHFLGFRTEKRELPVLWHQCLLTLVQRYKADLATEQKEALLELLRLQPHPQLSPEIRRELQSAVPRDVEDVPVTME</sequence>